<organism>
    <name type="scientific">Schizosaccharomyces pombe (strain 972 / ATCC 24843)</name>
    <name type="common">Fission yeast</name>
    <dbReference type="NCBI Taxonomy" id="284812"/>
    <lineage>
        <taxon>Eukaryota</taxon>
        <taxon>Fungi</taxon>
        <taxon>Dikarya</taxon>
        <taxon>Ascomycota</taxon>
        <taxon>Taphrinomycotina</taxon>
        <taxon>Schizosaccharomycetes</taxon>
        <taxon>Schizosaccharomycetales</taxon>
        <taxon>Schizosaccharomycetaceae</taxon>
        <taxon>Schizosaccharomyces</taxon>
    </lineage>
</organism>
<accession>P87120</accession>
<dbReference type="EC" id="3.1.26.5"/>
<dbReference type="EMBL" id="CU329670">
    <property type="protein sequence ID" value="CAB08749.2"/>
    <property type="molecule type" value="Genomic_DNA"/>
</dbReference>
<dbReference type="PIR" id="T38672">
    <property type="entry name" value="T38672"/>
</dbReference>
<dbReference type="RefSeq" id="NP_593330.1">
    <property type="nucleotide sequence ID" value="NM_001018761.1"/>
</dbReference>
<dbReference type="SMR" id="P87120"/>
<dbReference type="BioGRID" id="279496">
    <property type="interactions" value="2"/>
</dbReference>
<dbReference type="FunCoup" id="P87120">
    <property type="interactions" value="448"/>
</dbReference>
<dbReference type="STRING" id="284812.P87120"/>
<dbReference type="iPTMnet" id="P87120"/>
<dbReference type="PaxDb" id="4896-SPAC3A12.04c.1"/>
<dbReference type="EnsemblFungi" id="SPAC3A12.04c.1">
    <property type="protein sequence ID" value="SPAC3A12.04c.1:pep"/>
    <property type="gene ID" value="SPAC3A12.04c"/>
</dbReference>
<dbReference type="KEGG" id="spo:2543062"/>
<dbReference type="PomBase" id="SPAC3A12.04c"/>
<dbReference type="VEuPathDB" id="FungiDB:SPAC3A12.04c"/>
<dbReference type="eggNOG" id="KOG2363">
    <property type="taxonomic scope" value="Eukaryota"/>
</dbReference>
<dbReference type="HOGENOM" id="CLU_048451_3_0_1"/>
<dbReference type="InParanoid" id="P87120"/>
<dbReference type="OMA" id="CYGPGIT"/>
<dbReference type="PhylomeDB" id="P87120"/>
<dbReference type="PRO" id="PR:P87120"/>
<dbReference type="Proteomes" id="UP000002485">
    <property type="component" value="Chromosome I"/>
</dbReference>
<dbReference type="GO" id="GO:0005655">
    <property type="term" value="C:nucleolar ribonuclease P complex"/>
    <property type="evidence" value="ECO:0000318"/>
    <property type="project" value="GO_Central"/>
</dbReference>
<dbReference type="GO" id="GO:0000172">
    <property type="term" value="C:ribonuclease MRP complex"/>
    <property type="evidence" value="ECO:0000269"/>
    <property type="project" value="PomBase"/>
</dbReference>
<dbReference type="GO" id="GO:0004526">
    <property type="term" value="F:ribonuclease P activity"/>
    <property type="evidence" value="ECO:0007669"/>
    <property type="project" value="UniProtKB-EC"/>
</dbReference>
<dbReference type="GO" id="GO:0003723">
    <property type="term" value="F:RNA binding"/>
    <property type="evidence" value="ECO:0000318"/>
    <property type="project" value="GO_Central"/>
</dbReference>
<dbReference type="GO" id="GO:0000447">
    <property type="term" value="P:endonucleolytic cleavage in ITS1 to separate SSU-rRNA from 5.8S rRNA and LSU-rRNA from tricistronic rRNA transcript (SSU-rRNA, 5.8S rRNA, LSU-rRNA)"/>
    <property type="evidence" value="ECO:0000314"/>
    <property type="project" value="PomBase"/>
</dbReference>
<dbReference type="GO" id="GO:0008033">
    <property type="term" value="P:tRNA processing"/>
    <property type="evidence" value="ECO:0000314"/>
    <property type="project" value="PomBase"/>
</dbReference>
<dbReference type="FunFam" id="3.20.20.140:FF:000044">
    <property type="entry name" value="Polymerase/histidinol phosphatase-like protein"/>
    <property type="match status" value="1"/>
</dbReference>
<dbReference type="Gene3D" id="3.20.20.140">
    <property type="entry name" value="Metal-dependent hydrolases"/>
    <property type="match status" value="1"/>
</dbReference>
<dbReference type="InterPro" id="IPR016195">
    <property type="entry name" value="Pol/histidinol_Pase-like"/>
</dbReference>
<dbReference type="InterPro" id="IPR002738">
    <property type="entry name" value="RNase_P_p30"/>
</dbReference>
<dbReference type="PANTHER" id="PTHR13031:SF0">
    <property type="entry name" value="RIBONUCLEASE P PROTEIN SUBUNIT P30"/>
    <property type="match status" value="1"/>
</dbReference>
<dbReference type="PANTHER" id="PTHR13031">
    <property type="entry name" value="RIBONUCLEASE P SUBUNIT P30"/>
    <property type="match status" value="1"/>
</dbReference>
<dbReference type="Pfam" id="PF01876">
    <property type="entry name" value="RNase_P_p30"/>
    <property type="match status" value="1"/>
</dbReference>
<dbReference type="SUPFAM" id="SSF89550">
    <property type="entry name" value="PHP domain-like"/>
    <property type="match status" value="1"/>
</dbReference>
<reference key="1">
    <citation type="journal article" date="2002" name="Nature">
        <title>The genome sequence of Schizosaccharomyces pombe.</title>
        <authorList>
            <person name="Wood V."/>
            <person name="Gwilliam R."/>
            <person name="Rajandream M.A."/>
            <person name="Lyne M.H."/>
            <person name="Lyne R."/>
            <person name="Stewart A."/>
            <person name="Sgouros J.G."/>
            <person name="Peat N."/>
            <person name="Hayles J."/>
            <person name="Baker S.G."/>
            <person name="Basham D."/>
            <person name="Bowman S."/>
            <person name="Brooks K."/>
            <person name="Brown D."/>
            <person name="Brown S."/>
            <person name="Chillingworth T."/>
            <person name="Churcher C.M."/>
            <person name="Collins M."/>
            <person name="Connor R."/>
            <person name="Cronin A."/>
            <person name="Davis P."/>
            <person name="Feltwell T."/>
            <person name="Fraser A."/>
            <person name="Gentles S."/>
            <person name="Goble A."/>
            <person name="Hamlin N."/>
            <person name="Harris D.E."/>
            <person name="Hidalgo J."/>
            <person name="Hodgson G."/>
            <person name="Holroyd S."/>
            <person name="Hornsby T."/>
            <person name="Howarth S."/>
            <person name="Huckle E.J."/>
            <person name="Hunt S."/>
            <person name="Jagels K."/>
            <person name="James K.D."/>
            <person name="Jones L."/>
            <person name="Jones M."/>
            <person name="Leather S."/>
            <person name="McDonald S."/>
            <person name="McLean J."/>
            <person name="Mooney P."/>
            <person name="Moule S."/>
            <person name="Mungall K.L."/>
            <person name="Murphy L.D."/>
            <person name="Niblett D."/>
            <person name="Odell C."/>
            <person name="Oliver K."/>
            <person name="O'Neil S."/>
            <person name="Pearson D."/>
            <person name="Quail M.A."/>
            <person name="Rabbinowitsch E."/>
            <person name="Rutherford K.M."/>
            <person name="Rutter S."/>
            <person name="Saunders D."/>
            <person name="Seeger K."/>
            <person name="Sharp S."/>
            <person name="Skelton J."/>
            <person name="Simmonds M.N."/>
            <person name="Squares R."/>
            <person name="Squares S."/>
            <person name="Stevens K."/>
            <person name="Taylor K."/>
            <person name="Taylor R.G."/>
            <person name="Tivey A."/>
            <person name="Walsh S.V."/>
            <person name="Warren T."/>
            <person name="Whitehead S."/>
            <person name="Woodward J.R."/>
            <person name="Volckaert G."/>
            <person name="Aert R."/>
            <person name="Robben J."/>
            <person name="Grymonprez B."/>
            <person name="Weltjens I."/>
            <person name="Vanstreels E."/>
            <person name="Rieger M."/>
            <person name="Schaefer M."/>
            <person name="Mueller-Auer S."/>
            <person name="Gabel C."/>
            <person name="Fuchs M."/>
            <person name="Duesterhoeft A."/>
            <person name="Fritzc C."/>
            <person name="Holzer E."/>
            <person name="Moestl D."/>
            <person name="Hilbert H."/>
            <person name="Borzym K."/>
            <person name="Langer I."/>
            <person name="Beck A."/>
            <person name="Lehrach H."/>
            <person name="Reinhardt R."/>
            <person name="Pohl T.M."/>
            <person name="Eger P."/>
            <person name="Zimmermann W."/>
            <person name="Wedler H."/>
            <person name="Wambutt R."/>
            <person name="Purnelle B."/>
            <person name="Goffeau A."/>
            <person name="Cadieu E."/>
            <person name="Dreano S."/>
            <person name="Gloux S."/>
            <person name="Lelaure V."/>
            <person name="Mottier S."/>
            <person name="Galibert F."/>
            <person name="Aves S.J."/>
            <person name="Xiang Z."/>
            <person name="Hunt C."/>
            <person name="Moore K."/>
            <person name="Hurst S.M."/>
            <person name="Lucas M."/>
            <person name="Rochet M."/>
            <person name="Gaillardin C."/>
            <person name="Tallada V.A."/>
            <person name="Garzon A."/>
            <person name="Thode G."/>
            <person name="Daga R.R."/>
            <person name="Cruzado L."/>
            <person name="Jimenez J."/>
            <person name="Sanchez M."/>
            <person name="del Rey F."/>
            <person name="Benito J."/>
            <person name="Dominguez A."/>
            <person name="Revuelta J.L."/>
            <person name="Moreno S."/>
            <person name="Armstrong J."/>
            <person name="Forsburg S.L."/>
            <person name="Cerutti L."/>
            <person name="Lowe T."/>
            <person name="McCombie W.R."/>
            <person name="Paulsen I."/>
            <person name="Potashkin J."/>
            <person name="Shpakovski G.V."/>
            <person name="Ussery D."/>
            <person name="Barrell B.G."/>
            <person name="Nurse P."/>
        </authorList>
    </citation>
    <scope>NUCLEOTIDE SEQUENCE [LARGE SCALE GENOMIC DNA]</scope>
    <source>
        <strain>972 / ATCC 24843</strain>
    </source>
</reference>
<feature type="chain" id="PRO_0000140033" description="Probable ribonuclease P protein subunit 3">
    <location>
        <begin position="1"/>
        <end position="235"/>
    </location>
</feature>
<gene>
    <name type="ORF">SPAC3A12.04c</name>
</gene>
<proteinExistence type="inferred from homology"/>
<protein>
    <recommendedName>
        <fullName>Probable ribonuclease P protein subunit 3</fullName>
        <ecNumber>3.1.26.5</ecNumber>
    </recommendedName>
</protein>
<comment type="function">
    <text evidence="1">Part of ribonuclease P, a protein complex that generates mature tRNA molecules by cleaving their 5'-ends.</text>
</comment>
<comment type="catalytic activity">
    <reaction>
        <text>Endonucleolytic cleavage of RNA, removing 5'-extranucleotides from tRNA precursor.</text>
        <dbReference type="EC" id="3.1.26.5"/>
    </reaction>
</comment>
<comment type="subcellular location">
    <subcellularLocation>
        <location evidence="2">Nucleus</location>
    </subcellularLocation>
</comment>
<comment type="similarity">
    <text evidence="2">Belongs to the eukaryotic/archaeal RNase P protein component 3 family.</text>
</comment>
<keyword id="KW-0378">Hydrolase</keyword>
<keyword id="KW-0539">Nucleus</keyword>
<keyword id="KW-1185">Reference proteome</keyword>
<keyword id="KW-0819">tRNA processing</keyword>
<sequence length="235" mass="26799">MFIDLNVVWPTLGVKDLNLVKTVKTLERLGYTAIALNYQYDGKLQNVIKNPIVKELYPEQKIKIYSRITLTIESMPQNKVLSNVTKEFDILAIRPIGDRLLQQTCSDLEFDILSIDFTQRLPFYLKHTFMGLAVSRDIGIEISYSSGLRDVSNRRNLITNATSLVRATRGRGIIVTSETRTPLECRAGFDVINLATFWDLKQDQARKSVGESCRSVLLHAETRRDTYRSILNGCH</sequence>
<name>RNP3_SCHPO</name>
<evidence type="ECO:0000250" key="1"/>
<evidence type="ECO:0000305" key="2"/>